<proteinExistence type="evidence at transcript level"/>
<comment type="function">
    <text evidence="1">Involved in calcium binding and microtubule stabilization.</text>
</comment>
<comment type="subcellular location">
    <subcellularLocation>
        <location evidence="1">Cytoplasm</location>
    </subcellularLocation>
</comment>
<comment type="similarity">
    <text evidence="2">Belongs to the TCTP family.</text>
</comment>
<sequence length="171" mass="19123">MIIYKDIITGDEMFSDIYKIKESENGMMIEVEGKMISRAEGEIDDALIGGNASAEVQDEGCESTTVSGVDIVLNHKLQETSYDKKSYTAYIKDYMKAVKAKLQEVAPDRVDPFMANAPAEVKKILGNIKNFQFFTGESMNPDGMIGLLDFREDGVTPYMLFFKDGLEIEKC</sequence>
<reference key="1">
    <citation type="submission" date="2001-03" db="EMBL/GenBank/DDBJ databases">
        <title>Labeo rohita translationally controlled tumor protein.</title>
        <authorList>
            <person name="Venugopal T."/>
            <person name="Saral M.V."/>
            <person name="Pandian T.J."/>
            <person name="Mathavan S."/>
        </authorList>
    </citation>
    <scope>NUCLEOTIDE SEQUENCE [MRNA]</scope>
</reference>
<protein>
    <recommendedName>
        <fullName>Translationally-controlled tumor protein homolog</fullName>
        <shortName>TCTP</shortName>
    </recommendedName>
</protein>
<dbReference type="EMBL" id="AY028419">
    <property type="protein sequence ID" value="AAK27316.1"/>
    <property type="molecule type" value="mRNA"/>
</dbReference>
<dbReference type="RefSeq" id="XP_050972081.1">
    <property type="nucleotide sequence ID" value="XM_051116124.1"/>
</dbReference>
<dbReference type="SMR" id="Q98SJ7"/>
<dbReference type="GeneID" id="127168952"/>
<dbReference type="OrthoDB" id="10248936at2759"/>
<dbReference type="GO" id="GO:0005737">
    <property type="term" value="C:cytoplasm"/>
    <property type="evidence" value="ECO:0007669"/>
    <property type="project" value="UniProtKB-SubCell"/>
</dbReference>
<dbReference type="GO" id="GO:0005509">
    <property type="term" value="F:calcium ion binding"/>
    <property type="evidence" value="ECO:0007669"/>
    <property type="project" value="TreeGrafter"/>
</dbReference>
<dbReference type="FunFam" id="2.170.150.10:FF:000001">
    <property type="entry name" value="Tumor protein, translationally-controlled 1"/>
    <property type="match status" value="1"/>
</dbReference>
<dbReference type="Gene3D" id="2.170.150.10">
    <property type="entry name" value="Metal Binding Protein, Guanine Nucleotide Exchange Factor, Chain A"/>
    <property type="match status" value="1"/>
</dbReference>
<dbReference type="InterPro" id="IPR011057">
    <property type="entry name" value="Mss4-like_sf"/>
</dbReference>
<dbReference type="InterPro" id="IPR011323">
    <property type="entry name" value="Mss4/transl-control_tumour"/>
</dbReference>
<dbReference type="InterPro" id="IPR034737">
    <property type="entry name" value="TCTP"/>
</dbReference>
<dbReference type="InterPro" id="IPR018103">
    <property type="entry name" value="Translation_control_tumour_CS"/>
</dbReference>
<dbReference type="InterPro" id="IPR018105">
    <property type="entry name" value="Translational_control_tumour_p"/>
</dbReference>
<dbReference type="PANTHER" id="PTHR11991">
    <property type="entry name" value="TRANSLATIONALLY CONTROLLED TUMOR PROTEIN-RELATED"/>
    <property type="match status" value="1"/>
</dbReference>
<dbReference type="PANTHER" id="PTHR11991:SF0">
    <property type="entry name" value="TRANSLATIONALLY-CONTROLLED TUMOR PROTEIN"/>
    <property type="match status" value="1"/>
</dbReference>
<dbReference type="Pfam" id="PF00838">
    <property type="entry name" value="TCTP"/>
    <property type="match status" value="1"/>
</dbReference>
<dbReference type="PRINTS" id="PR01653">
    <property type="entry name" value="TCTPROTEIN"/>
</dbReference>
<dbReference type="SUPFAM" id="SSF51316">
    <property type="entry name" value="Mss4-like"/>
    <property type="match status" value="1"/>
</dbReference>
<dbReference type="PROSITE" id="PS01002">
    <property type="entry name" value="TCTP_1"/>
    <property type="match status" value="1"/>
</dbReference>
<dbReference type="PROSITE" id="PS01003">
    <property type="entry name" value="TCTP_2"/>
    <property type="match status" value="1"/>
</dbReference>
<dbReference type="PROSITE" id="PS51797">
    <property type="entry name" value="TCTP_3"/>
    <property type="match status" value="1"/>
</dbReference>
<keyword id="KW-0106">Calcium</keyword>
<keyword id="KW-0963">Cytoplasm</keyword>
<organism>
    <name type="scientific">Labeo rohita</name>
    <name type="common">Indian major carp</name>
    <name type="synonym">Cyprinus rohita</name>
    <dbReference type="NCBI Taxonomy" id="84645"/>
    <lineage>
        <taxon>Eukaryota</taxon>
        <taxon>Metazoa</taxon>
        <taxon>Chordata</taxon>
        <taxon>Craniata</taxon>
        <taxon>Vertebrata</taxon>
        <taxon>Euteleostomi</taxon>
        <taxon>Actinopterygii</taxon>
        <taxon>Neopterygii</taxon>
        <taxon>Teleostei</taxon>
        <taxon>Ostariophysi</taxon>
        <taxon>Cypriniformes</taxon>
        <taxon>Cyprinidae</taxon>
        <taxon>Labeoninae</taxon>
        <taxon>Labeonini</taxon>
        <taxon>Labeo</taxon>
    </lineage>
</organism>
<evidence type="ECO:0000250" key="1"/>
<evidence type="ECO:0000255" key="2">
    <source>
        <dbReference type="PROSITE-ProRule" id="PRU01133"/>
    </source>
</evidence>
<gene>
    <name type="primary">tpt1</name>
</gene>
<name>TCTP_LABRO</name>
<accession>Q98SJ7</accession>
<feature type="chain" id="PRO_0000211275" description="Translationally-controlled tumor protein homolog">
    <location>
        <begin position="1"/>
        <end position="171"/>
    </location>
</feature>
<feature type="domain" description="TCTP" evidence="2">
    <location>
        <begin position="1"/>
        <end position="171"/>
    </location>
</feature>